<protein>
    <recommendedName>
        <fullName evidence="1">Large ribosomal subunit protein bL34</fullName>
    </recommendedName>
    <alternativeName>
        <fullName evidence="2">50S ribosomal protein L34</fullName>
    </alternativeName>
</protein>
<accession>A6TG05</accession>
<reference key="1">
    <citation type="submission" date="2006-09" db="EMBL/GenBank/DDBJ databases">
        <authorList>
            <consortium name="The Klebsiella pneumonia Genome Sequencing Project"/>
            <person name="McClelland M."/>
            <person name="Sanderson E.K."/>
            <person name="Spieth J."/>
            <person name="Clifton W.S."/>
            <person name="Latreille P."/>
            <person name="Sabo A."/>
            <person name="Pepin K."/>
            <person name="Bhonagiri V."/>
            <person name="Porwollik S."/>
            <person name="Ali J."/>
            <person name="Wilson R.K."/>
        </authorList>
    </citation>
    <scope>NUCLEOTIDE SEQUENCE [LARGE SCALE GENOMIC DNA]</scope>
    <source>
        <strain>ATCC 700721 / MGH 78578</strain>
    </source>
</reference>
<name>RL34_KLEP7</name>
<gene>
    <name evidence="1" type="primary">rpmH</name>
    <name type="ordered locus">KPN78578_40650</name>
    <name type="ORF">KPN_04106</name>
</gene>
<sequence length="46" mass="5380">MKRTFQPSVLKRNRSHGFRARMATKNGRQVLARRRAKGRARLTVSK</sequence>
<keyword id="KW-0687">Ribonucleoprotein</keyword>
<keyword id="KW-0689">Ribosomal protein</keyword>
<organism>
    <name type="scientific">Klebsiella pneumoniae subsp. pneumoniae (strain ATCC 700721 / MGH 78578)</name>
    <dbReference type="NCBI Taxonomy" id="272620"/>
    <lineage>
        <taxon>Bacteria</taxon>
        <taxon>Pseudomonadati</taxon>
        <taxon>Pseudomonadota</taxon>
        <taxon>Gammaproteobacteria</taxon>
        <taxon>Enterobacterales</taxon>
        <taxon>Enterobacteriaceae</taxon>
        <taxon>Klebsiella/Raoultella group</taxon>
        <taxon>Klebsiella</taxon>
        <taxon>Klebsiella pneumoniae complex</taxon>
    </lineage>
</organism>
<proteinExistence type="inferred from homology"/>
<feature type="chain" id="PRO_1000013357" description="Large ribosomal subunit protein bL34">
    <location>
        <begin position="1"/>
        <end position="46"/>
    </location>
</feature>
<dbReference type="EMBL" id="CP000647">
    <property type="protein sequence ID" value="ABR79489.1"/>
    <property type="molecule type" value="Genomic_DNA"/>
</dbReference>
<dbReference type="RefSeq" id="WP_000831330.1">
    <property type="nucleotide sequence ID" value="NC_009648.1"/>
</dbReference>
<dbReference type="SMR" id="A6TG05"/>
<dbReference type="STRING" id="272620.KPN_04106"/>
<dbReference type="PaxDb" id="272620-KPN_04106"/>
<dbReference type="EnsemblBacteria" id="ABR79489">
    <property type="protein sequence ID" value="ABR79489"/>
    <property type="gene ID" value="KPN_04106"/>
</dbReference>
<dbReference type="GeneID" id="98190980"/>
<dbReference type="KEGG" id="kpn:KPN_04106"/>
<dbReference type="HOGENOM" id="CLU_129938_2_1_6"/>
<dbReference type="Proteomes" id="UP000000265">
    <property type="component" value="Chromosome"/>
</dbReference>
<dbReference type="GO" id="GO:1990904">
    <property type="term" value="C:ribonucleoprotein complex"/>
    <property type="evidence" value="ECO:0007669"/>
    <property type="project" value="UniProtKB-KW"/>
</dbReference>
<dbReference type="GO" id="GO:0005840">
    <property type="term" value="C:ribosome"/>
    <property type="evidence" value="ECO:0007669"/>
    <property type="project" value="UniProtKB-KW"/>
</dbReference>
<dbReference type="GO" id="GO:0003735">
    <property type="term" value="F:structural constituent of ribosome"/>
    <property type="evidence" value="ECO:0007669"/>
    <property type="project" value="InterPro"/>
</dbReference>
<dbReference type="GO" id="GO:0006412">
    <property type="term" value="P:translation"/>
    <property type="evidence" value="ECO:0007669"/>
    <property type="project" value="UniProtKB-UniRule"/>
</dbReference>
<dbReference type="FunFam" id="1.10.287.3980:FF:000001">
    <property type="entry name" value="Mitochondrial ribosomal protein L34"/>
    <property type="match status" value="1"/>
</dbReference>
<dbReference type="Gene3D" id="1.10.287.3980">
    <property type="match status" value="1"/>
</dbReference>
<dbReference type="HAMAP" id="MF_00391">
    <property type="entry name" value="Ribosomal_bL34"/>
    <property type="match status" value="1"/>
</dbReference>
<dbReference type="InterPro" id="IPR000271">
    <property type="entry name" value="Ribosomal_bL34"/>
</dbReference>
<dbReference type="InterPro" id="IPR020939">
    <property type="entry name" value="Ribosomal_bL34_CS"/>
</dbReference>
<dbReference type="NCBIfam" id="TIGR01030">
    <property type="entry name" value="rpmH_bact"/>
    <property type="match status" value="1"/>
</dbReference>
<dbReference type="PANTHER" id="PTHR14503:SF4">
    <property type="entry name" value="LARGE RIBOSOMAL SUBUNIT PROTEIN BL34M"/>
    <property type="match status" value="1"/>
</dbReference>
<dbReference type="PANTHER" id="PTHR14503">
    <property type="entry name" value="MITOCHONDRIAL RIBOSOMAL PROTEIN 34 FAMILY MEMBER"/>
    <property type="match status" value="1"/>
</dbReference>
<dbReference type="Pfam" id="PF00468">
    <property type="entry name" value="Ribosomal_L34"/>
    <property type="match status" value="1"/>
</dbReference>
<dbReference type="PROSITE" id="PS00784">
    <property type="entry name" value="RIBOSOMAL_L34"/>
    <property type="match status" value="1"/>
</dbReference>
<evidence type="ECO:0000255" key="1">
    <source>
        <dbReference type="HAMAP-Rule" id="MF_00391"/>
    </source>
</evidence>
<evidence type="ECO:0000305" key="2"/>
<comment type="similarity">
    <text evidence="1">Belongs to the bacterial ribosomal protein bL34 family.</text>
</comment>